<organism>
    <name type="scientific">Enterococcus faecalis (strain ATCC 700802 / V583)</name>
    <dbReference type="NCBI Taxonomy" id="226185"/>
    <lineage>
        <taxon>Bacteria</taxon>
        <taxon>Bacillati</taxon>
        <taxon>Bacillota</taxon>
        <taxon>Bacilli</taxon>
        <taxon>Lactobacillales</taxon>
        <taxon>Enterococcaceae</taxon>
        <taxon>Enterococcus</taxon>
    </lineage>
</organism>
<name>RL22_ENTFA</name>
<gene>
    <name evidence="1" type="primary">rplV</name>
    <name type="ordered locus">EF_0211</name>
</gene>
<keyword id="KW-0002">3D-structure</keyword>
<keyword id="KW-1185">Reference proteome</keyword>
<keyword id="KW-0687">Ribonucleoprotein</keyword>
<keyword id="KW-0689">Ribosomal protein</keyword>
<keyword id="KW-0694">RNA-binding</keyword>
<keyword id="KW-0699">rRNA-binding</keyword>
<accession>Q839F9</accession>
<reference key="1">
    <citation type="journal article" date="2003" name="Science">
        <title>Role of mobile DNA in the evolution of vancomycin-resistant Enterococcus faecalis.</title>
        <authorList>
            <person name="Paulsen I.T."/>
            <person name="Banerjei L."/>
            <person name="Myers G.S.A."/>
            <person name="Nelson K.E."/>
            <person name="Seshadri R."/>
            <person name="Read T.D."/>
            <person name="Fouts D.E."/>
            <person name="Eisen J.A."/>
            <person name="Gill S.R."/>
            <person name="Heidelberg J.F."/>
            <person name="Tettelin H."/>
            <person name="Dodson R.J."/>
            <person name="Umayam L.A."/>
            <person name="Brinkac L.M."/>
            <person name="Beanan M.J."/>
            <person name="Daugherty S.C."/>
            <person name="DeBoy R.T."/>
            <person name="Durkin S.A."/>
            <person name="Kolonay J.F."/>
            <person name="Madupu R."/>
            <person name="Nelson W.C."/>
            <person name="Vamathevan J.J."/>
            <person name="Tran B."/>
            <person name="Upton J."/>
            <person name="Hansen T."/>
            <person name="Shetty J."/>
            <person name="Khouri H.M."/>
            <person name="Utterback T.R."/>
            <person name="Radune D."/>
            <person name="Ketchum K.A."/>
            <person name="Dougherty B.A."/>
            <person name="Fraser C.M."/>
        </authorList>
    </citation>
    <scope>NUCLEOTIDE SEQUENCE [LARGE SCALE GENOMIC DNA]</scope>
    <source>
        <strain>ATCC 700802 / V583</strain>
    </source>
</reference>
<sequence length="115" mass="12453">MSEQITSAKATAKTVRTSPRKARLVIDLIRGKSVADAISILKFTPNKSAGIIEKVLMSAVANAENNFDLDVESLVVSEAFVNEGPTMKRFRPRAKGSASPINKRTSHITVVVTEK</sequence>
<proteinExistence type="evidence at protein level"/>
<feature type="chain" id="PRO_0000125156" description="Large ribosomal subunit protein uL22">
    <location>
        <begin position="1"/>
        <end position="115"/>
    </location>
</feature>
<feature type="strand" evidence="3">
    <location>
        <begin position="7"/>
        <end position="17"/>
    </location>
</feature>
<feature type="helix" evidence="3">
    <location>
        <begin position="19"/>
        <end position="26"/>
    </location>
</feature>
<feature type="turn" evidence="3">
    <location>
        <begin position="27"/>
        <end position="31"/>
    </location>
</feature>
<feature type="helix" evidence="3">
    <location>
        <begin position="34"/>
        <end position="42"/>
    </location>
</feature>
<feature type="helix" evidence="3">
    <location>
        <begin position="49"/>
        <end position="65"/>
    </location>
</feature>
<feature type="turn" evidence="3">
    <location>
        <begin position="71"/>
        <end position="73"/>
    </location>
</feature>
<feature type="strand" evidence="3">
    <location>
        <begin position="75"/>
        <end position="83"/>
    </location>
</feature>
<feature type="strand" evidence="3">
    <location>
        <begin position="87"/>
        <end position="92"/>
    </location>
</feature>
<feature type="helix" evidence="3">
    <location>
        <begin position="94"/>
        <end position="96"/>
    </location>
</feature>
<feature type="strand" evidence="3">
    <location>
        <begin position="98"/>
        <end position="103"/>
    </location>
</feature>
<feature type="strand" evidence="3">
    <location>
        <begin position="106"/>
        <end position="113"/>
    </location>
</feature>
<protein>
    <recommendedName>
        <fullName evidence="1">Large ribosomal subunit protein uL22</fullName>
    </recommendedName>
    <alternativeName>
        <fullName evidence="2">50S ribosomal protein L22</fullName>
    </alternativeName>
</protein>
<comment type="function">
    <text evidence="1">This protein binds specifically to 23S rRNA; its binding is stimulated by other ribosomal proteins, e.g. L4, L17, and L20. It is important during the early stages of 50S assembly. It makes multiple contacts with different domains of the 23S rRNA in the assembled 50S subunit and ribosome (By similarity).</text>
</comment>
<comment type="function">
    <text evidence="1">The globular domain of the protein is located near the polypeptide exit tunnel on the outside of the subunit, while an extended beta-hairpin is found that lines the wall of the exit tunnel in the center of the 70S ribosome.</text>
</comment>
<comment type="subunit">
    <text evidence="1">Part of the 50S ribosomal subunit.</text>
</comment>
<comment type="similarity">
    <text evidence="1">Belongs to the universal ribosomal protein uL22 family.</text>
</comment>
<dbReference type="EMBL" id="AE016830">
    <property type="protein sequence ID" value="AAO80080.1"/>
    <property type="molecule type" value="Genomic_DNA"/>
</dbReference>
<dbReference type="RefSeq" id="NP_814009.1">
    <property type="nucleotide sequence ID" value="NC_004668.1"/>
</dbReference>
<dbReference type="RefSeq" id="WP_002356206.1">
    <property type="nucleotide sequence ID" value="NZ_KE136524.1"/>
</dbReference>
<dbReference type="PDB" id="6WU9">
    <property type="method" value="EM"/>
    <property type="resolution" value="2.90 A"/>
    <property type="chains" value="T=4-115"/>
</dbReference>
<dbReference type="PDB" id="7P7Q">
    <property type="method" value="EM"/>
    <property type="resolution" value="2.40 A"/>
    <property type="chains" value="V=1-115"/>
</dbReference>
<dbReference type="PDB" id="7P7R">
    <property type="method" value="EM"/>
    <property type="resolution" value="2.90 A"/>
    <property type="chains" value="V=1-115"/>
</dbReference>
<dbReference type="PDBsum" id="6WU9"/>
<dbReference type="PDBsum" id="7P7Q"/>
<dbReference type="PDBsum" id="7P7R"/>
<dbReference type="EMDB" id="EMD-13241"/>
<dbReference type="EMDB" id="EMD-13242"/>
<dbReference type="SMR" id="Q839F9"/>
<dbReference type="STRING" id="226185.EF_0211"/>
<dbReference type="EnsemblBacteria" id="AAO80080">
    <property type="protein sequence ID" value="AAO80080"/>
    <property type="gene ID" value="EF_0211"/>
</dbReference>
<dbReference type="GeneID" id="60892706"/>
<dbReference type="KEGG" id="efa:EF0211"/>
<dbReference type="PATRIC" id="fig|226185.45.peg.55"/>
<dbReference type="eggNOG" id="COG0091">
    <property type="taxonomic scope" value="Bacteria"/>
</dbReference>
<dbReference type="HOGENOM" id="CLU_083987_3_3_9"/>
<dbReference type="Proteomes" id="UP000001415">
    <property type="component" value="Chromosome"/>
</dbReference>
<dbReference type="GO" id="GO:0022625">
    <property type="term" value="C:cytosolic large ribosomal subunit"/>
    <property type="evidence" value="ECO:0007669"/>
    <property type="project" value="TreeGrafter"/>
</dbReference>
<dbReference type="GO" id="GO:0019843">
    <property type="term" value="F:rRNA binding"/>
    <property type="evidence" value="ECO:0007669"/>
    <property type="project" value="UniProtKB-UniRule"/>
</dbReference>
<dbReference type="GO" id="GO:0003735">
    <property type="term" value="F:structural constituent of ribosome"/>
    <property type="evidence" value="ECO:0007669"/>
    <property type="project" value="InterPro"/>
</dbReference>
<dbReference type="GO" id="GO:0006412">
    <property type="term" value="P:translation"/>
    <property type="evidence" value="ECO:0007669"/>
    <property type="project" value="UniProtKB-UniRule"/>
</dbReference>
<dbReference type="CDD" id="cd00336">
    <property type="entry name" value="Ribosomal_L22"/>
    <property type="match status" value="1"/>
</dbReference>
<dbReference type="FunFam" id="3.90.470.10:FF:000001">
    <property type="entry name" value="50S ribosomal protein L22"/>
    <property type="match status" value="1"/>
</dbReference>
<dbReference type="Gene3D" id="3.90.470.10">
    <property type="entry name" value="Ribosomal protein L22/L17"/>
    <property type="match status" value="1"/>
</dbReference>
<dbReference type="HAMAP" id="MF_01331_B">
    <property type="entry name" value="Ribosomal_uL22_B"/>
    <property type="match status" value="1"/>
</dbReference>
<dbReference type="InterPro" id="IPR001063">
    <property type="entry name" value="Ribosomal_uL22"/>
</dbReference>
<dbReference type="InterPro" id="IPR005727">
    <property type="entry name" value="Ribosomal_uL22_bac/chlpt-type"/>
</dbReference>
<dbReference type="InterPro" id="IPR047867">
    <property type="entry name" value="Ribosomal_uL22_bac/org-type"/>
</dbReference>
<dbReference type="InterPro" id="IPR018260">
    <property type="entry name" value="Ribosomal_uL22_CS"/>
</dbReference>
<dbReference type="InterPro" id="IPR036394">
    <property type="entry name" value="Ribosomal_uL22_sf"/>
</dbReference>
<dbReference type="NCBIfam" id="TIGR01044">
    <property type="entry name" value="rplV_bact"/>
    <property type="match status" value="1"/>
</dbReference>
<dbReference type="PANTHER" id="PTHR13501">
    <property type="entry name" value="CHLOROPLAST 50S RIBOSOMAL PROTEIN L22-RELATED"/>
    <property type="match status" value="1"/>
</dbReference>
<dbReference type="PANTHER" id="PTHR13501:SF8">
    <property type="entry name" value="LARGE RIBOSOMAL SUBUNIT PROTEIN UL22M"/>
    <property type="match status" value="1"/>
</dbReference>
<dbReference type="Pfam" id="PF00237">
    <property type="entry name" value="Ribosomal_L22"/>
    <property type="match status" value="1"/>
</dbReference>
<dbReference type="SUPFAM" id="SSF54843">
    <property type="entry name" value="Ribosomal protein L22"/>
    <property type="match status" value="1"/>
</dbReference>
<dbReference type="PROSITE" id="PS00464">
    <property type="entry name" value="RIBOSOMAL_L22"/>
    <property type="match status" value="1"/>
</dbReference>
<evidence type="ECO:0000255" key="1">
    <source>
        <dbReference type="HAMAP-Rule" id="MF_01331"/>
    </source>
</evidence>
<evidence type="ECO:0000305" key="2"/>
<evidence type="ECO:0007829" key="3">
    <source>
        <dbReference type="PDB" id="6WU9"/>
    </source>
</evidence>